<protein>
    <recommendedName>
        <fullName evidence="1">UPF0761 membrane protein APL_1950</fullName>
    </recommendedName>
</protein>
<gene>
    <name type="ordered locus">APL_1950</name>
</gene>
<evidence type="ECO:0000255" key="1">
    <source>
        <dbReference type="HAMAP-Rule" id="MF_00672"/>
    </source>
</evidence>
<dbReference type="EMBL" id="CP000569">
    <property type="protein sequence ID" value="ABN75028.1"/>
    <property type="molecule type" value="Genomic_DNA"/>
</dbReference>
<dbReference type="RefSeq" id="WP_005602848.1">
    <property type="nucleotide sequence ID" value="NC_009053.1"/>
</dbReference>
<dbReference type="STRING" id="416269.APL_1950"/>
<dbReference type="EnsemblBacteria" id="ABN75028">
    <property type="protein sequence ID" value="ABN75028"/>
    <property type="gene ID" value="APL_1950"/>
</dbReference>
<dbReference type="KEGG" id="apl:APL_1950"/>
<dbReference type="eggNOG" id="COG1295">
    <property type="taxonomic scope" value="Bacteria"/>
</dbReference>
<dbReference type="HOGENOM" id="CLU_032288_0_0_6"/>
<dbReference type="Proteomes" id="UP000001432">
    <property type="component" value="Chromosome"/>
</dbReference>
<dbReference type="GO" id="GO:0005886">
    <property type="term" value="C:plasma membrane"/>
    <property type="evidence" value="ECO:0007669"/>
    <property type="project" value="UniProtKB-SubCell"/>
</dbReference>
<dbReference type="HAMAP" id="MF_00672">
    <property type="entry name" value="UPF0761"/>
    <property type="match status" value="1"/>
</dbReference>
<dbReference type="InterPro" id="IPR023679">
    <property type="entry name" value="UPF0761_bac"/>
</dbReference>
<dbReference type="InterPro" id="IPR017039">
    <property type="entry name" value="Virul_fac_BrkB"/>
</dbReference>
<dbReference type="NCBIfam" id="NF002457">
    <property type="entry name" value="PRK01637.1"/>
    <property type="match status" value="1"/>
</dbReference>
<dbReference type="NCBIfam" id="TIGR00765">
    <property type="entry name" value="yihY_not_rbn"/>
    <property type="match status" value="1"/>
</dbReference>
<dbReference type="PANTHER" id="PTHR30213">
    <property type="entry name" value="INNER MEMBRANE PROTEIN YHJD"/>
    <property type="match status" value="1"/>
</dbReference>
<dbReference type="PANTHER" id="PTHR30213:SF0">
    <property type="entry name" value="UPF0761 MEMBRANE PROTEIN YIHY"/>
    <property type="match status" value="1"/>
</dbReference>
<dbReference type="Pfam" id="PF03631">
    <property type="entry name" value="Virul_fac_BrkB"/>
    <property type="match status" value="1"/>
</dbReference>
<dbReference type="PIRSF" id="PIRSF035875">
    <property type="entry name" value="RNase_BN"/>
    <property type="match status" value="1"/>
</dbReference>
<name>Y1950_ACTP2</name>
<feature type="chain" id="PRO_0000391014" description="UPF0761 membrane protein APL_1950">
    <location>
        <begin position="1"/>
        <end position="276"/>
    </location>
</feature>
<feature type="transmembrane region" description="Helical" evidence="1">
    <location>
        <begin position="33"/>
        <end position="53"/>
    </location>
</feature>
<feature type="transmembrane region" description="Helical" evidence="1">
    <location>
        <begin position="90"/>
        <end position="110"/>
    </location>
</feature>
<feature type="transmembrane region" description="Helical" evidence="1">
    <location>
        <begin position="125"/>
        <end position="145"/>
    </location>
</feature>
<feature type="transmembrane region" description="Helical" evidence="1">
    <location>
        <begin position="147"/>
        <end position="167"/>
    </location>
</feature>
<feature type="transmembrane region" description="Helical" evidence="1">
    <location>
        <begin position="171"/>
        <end position="191"/>
    </location>
</feature>
<feature type="transmembrane region" description="Helical" evidence="1">
    <location>
        <begin position="203"/>
        <end position="223"/>
    </location>
</feature>
<feature type="transmembrane region" description="Helical" evidence="1">
    <location>
        <begin position="239"/>
        <end position="259"/>
    </location>
</feature>
<organism>
    <name type="scientific">Actinobacillus pleuropneumoniae serotype 5b (strain L20)</name>
    <dbReference type="NCBI Taxonomy" id="416269"/>
    <lineage>
        <taxon>Bacteria</taxon>
        <taxon>Pseudomonadati</taxon>
        <taxon>Pseudomonadota</taxon>
        <taxon>Gammaproteobacteria</taxon>
        <taxon>Pasteurellales</taxon>
        <taxon>Pasteurellaceae</taxon>
        <taxon>Actinobacillus</taxon>
    </lineage>
</organism>
<comment type="subcellular location">
    <subcellularLocation>
        <location evidence="1">Cell inner membrane</location>
        <topology evidence="1">Multi-pass membrane protein</topology>
    </subcellularLocation>
</comment>
<comment type="similarity">
    <text evidence="1">Belongs to the UPF0761 family.</text>
</comment>
<sequence>MSLSQPLFIKLLLKHWKIHNIPVSAGYLTYSTTLAIVPLVMVVFSIFTAFPIFQEATEQLKTLIYDNFAPNAGDMVEEYIDLFVANSKKMGIVSTIGLVVVALMLIQSIDETLNKMWRNHRKRSIFISFLLYAVILFIAPLLAGGSIAISSYIFSMAIFNENGLLSFSQQLLQYTPFLLIWLLFTTVYWLVPNTKVNILHAMLGAIVAAIFFTLGKQAFVWYISTFPSYQAIYGALAVLPIMLLWIHLSWQVVLFGGLITSTLNVYNEMKKGKLNL</sequence>
<proteinExistence type="inferred from homology"/>
<accession>A3N3P2</accession>
<reference key="1">
    <citation type="journal article" date="2008" name="J. Bacteriol.">
        <title>The complete genome sequence of Actinobacillus pleuropneumoniae L20 (serotype 5b).</title>
        <authorList>
            <person name="Foote S.J."/>
            <person name="Bosse J.T."/>
            <person name="Bouevitch A.B."/>
            <person name="Langford P.R."/>
            <person name="Young N.M."/>
            <person name="Nash J.H.E."/>
        </authorList>
    </citation>
    <scope>NUCLEOTIDE SEQUENCE [LARGE SCALE GENOMIC DNA]</scope>
    <source>
        <strain>L20</strain>
    </source>
</reference>
<keyword id="KW-0997">Cell inner membrane</keyword>
<keyword id="KW-1003">Cell membrane</keyword>
<keyword id="KW-0472">Membrane</keyword>
<keyword id="KW-1185">Reference proteome</keyword>
<keyword id="KW-0812">Transmembrane</keyword>
<keyword id="KW-1133">Transmembrane helix</keyword>